<name>RPOC_RHIEC</name>
<reference key="1">
    <citation type="journal article" date="2006" name="Proc. Natl. Acad. Sci. U.S.A.">
        <title>The partitioned Rhizobium etli genome: genetic and metabolic redundancy in seven interacting replicons.</title>
        <authorList>
            <person name="Gonzalez V."/>
            <person name="Santamaria R.I."/>
            <person name="Bustos P."/>
            <person name="Hernandez-Gonzalez I."/>
            <person name="Medrano-Soto A."/>
            <person name="Moreno-Hagelsieb G."/>
            <person name="Janga S.C."/>
            <person name="Ramirez M.A."/>
            <person name="Jimenez-Jacinto V."/>
            <person name="Collado-Vides J."/>
            <person name="Davila G."/>
        </authorList>
    </citation>
    <scope>NUCLEOTIDE SEQUENCE [LARGE SCALE GENOMIC DNA]</scope>
    <source>
        <strain>ATCC 51251 / DSM 11541 / JCM 21823 / NBRC 15573 / CFN 42</strain>
    </source>
</reference>
<sequence length="1402" mass="155290">MNQEVMNLFNGQVPAQNFDSIRISIASPEKILSWSYGEIKKPETINYRTFKPERDGLFCARIFGPIKDYECLCGKYKRMKYKGIICEKCGVEVTLSRVRRERMGHIELAAPVAHIWFLKSLPSRISTLLDMTLKDVERVLYFENYIVTEPGLTALKEHQLLTEEEYMLAVDEYGEDQFTAMIGAEAIYEMLASMNLEKIAGDLRSELADTTSDLKQKKLMKRLKIVENFMESGNRPEWMIMKVVPVIPPDLRPLVPLDGGRFATSDLNDLYRRVINRNNRLKRLIELRAPGIIIRNEKRMLQESVDALFDNGRRGRVITGANKRPLKSLSDMLKGKQGRFRQNLLGKRVDYSGRSVIVTGPELKLHQCGLPKKMALELFKPFIYARLDAKGYSSTVKQAKKLVEKEKPEVWDILDEVIREHPVLLNRAPTLHRLGIQAFEPTLVEGKAIQLHPLVCTAFNADFDGDQMAVHVPLSLEAQLEARVLMMSTNNILHPANGAPIIVPSQDMVLGLYYLSILNQNEPGEGMAFSDLGELHHALESKVVTLHTKIRGRFKSVDEDGKPYSKIYETTPGRLLIGELLPKNGKVPFDICNQEMTKKNISKMIDTVYRHCGQKDTVIFCDRIMQLGFSHACRAGISFGKDDMVIPATKAKIVADTENLVKEYEQQYNDGLITQGEKYNKVVDAWGKATEKVAEEMMARIKAVEFDENTGRQKPMNSIYMMSHSGARGSPNQMRQLGGMRGLMAKPSGEIIETPIISNFKEGLTVNEYFNSTHGARKGLADTALKTANSGYLTRRLVDVAQDCIVTHVDCGTETGLTMTAIVDAGQVVASLGARILGRTALDDIDHPVTGERIVDAGKMILEPDVIEIEKAGIQSIRIRSALTCEIQTGVCSVCYGRDLARGTPVNMGEAVGVIAAQSIGEPGTQLTMRTFHLGGTATVVDQSFLEASYEGTVQIKNRNVLRNSEGSLVAMGRNMTVQILDERGVERSSQRVAYGSKLHVDEGDKVKRGQRLAEWDPYTRPMMTEVAGTVQFEDLVDGLSVLEATDESTGITKRQVIDWRSTPRGSDLKPAIVIKDASGNVAKLSRGGDARFLLSVDAILSVEPGTKVSQGDVLARSPLESAKTKDITGGLPRVAELFEARRPKDHAIIAEIDGTIRLGRDYKNKRRVIIEPAEDGVEPVEYLIPKGKPFHLQDGDYIEKGDYILDGNPAPHDILAIKGVEALASYLVNEIQEVYRLQGVVINDKHIEVIVRQMLQKVEITDAGDSTYIVGDNVDRIELEDVNDHLIEQGKKPASGEPVLLGITKASLQTPSFISAASFQETTKVLTEAAIAGKTDGLQGLKENVIVGRLIPAGTGGTMTQIRRIATSRDELILEERRKGTGAAVATPMLQDMAENAPAAE</sequence>
<keyword id="KW-0240">DNA-directed RNA polymerase</keyword>
<keyword id="KW-0460">Magnesium</keyword>
<keyword id="KW-0479">Metal-binding</keyword>
<keyword id="KW-0548">Nucleotidyltransferase</keyword>
<keyword id="KW-1185">Reference proteome</keyword>
<keyword id="KW-0804">Transcription</keyword>
<keyword id="KW-0808">Transferase</keyword>
<keyword id="KW-0862">Zinc</keyword>
<gene>
    <name evidence="1" type="primary">rpoC</name>
    <name type="ordered locus">RHE_CH01668</name>
</gene>
<feature type="chain" id="PRO_0000240816" description="DNA-directed RNA polymerase subunit beta'">
    <location>
        <begin position="1"/>
        <end position="1402"/>
    </location>
</feature>
<feature type="binding site" evidence="1">
    <location>
        <position position="71"/>
    </location>
    <ligand>
        <name>Zn(2+)</name>
        <dbReference type="ChEBI" id="CHEBI:29105"/>
        <label>1</label>
    </ligand>
</feature>
<feature type="binding site" evidence="1">
    <location>
        <position position="73"/>
    </location>
    <ligand>
        <name>Zn(2+)</name>
        <dbReference type="ChEBI" id="CHEBI:29105"/>
        <label>1</label>
    </ligand>
</feature>
<feature type="binding site" evidence="1">
    <location>
        <position position="86"/>
    </location>
    <ligand>
        <name>Zn(2+)</name>
        <dbReference type="ChEBI" id="CHEBI:29105"/>
        <label>1</label>
    </ligand>
</feature>
<feature type="binding site" evidence="1">
    <location>
        <position position="89"/>
    </location>
    <ligand>
        <name>Zn(2+)</name>
        <dbReference type="ChEBI" id="CHEBI:29105"/>
        <label>1</label>
    </ligand>
</feature>
<feature type="binding site" evidence="1">
    <location>
        <position position="462"/>
    </location>
    <ligand>
        <name>Mg(2+)</name>
        <dbReference type="ChEBI" id="CHEBI:18420"/>
    </ligand>
</feature>
<feature type="binding site" evidence="1">
    <location>
        <position position="464"/>
    </location>
    <ligand>
        <name>Mg(2+)</name>
        <dbReference type="ChEBI" id="CHEBI:18420"/>
    </ligand>
</feature>
<feature type="binding site" evidence="1">
    <location>
        <position position="466"/>
    </location>
    <ligand>
        <name>Mg(2+)</name>
        <dbReference type="ChEBI" id="CHEBI:18420"/>
    </ligand>
</feature>
<feature type="binding site" evidence="1">
    <location>
        <position position="811"/>
    </location>
    <ligand>
        <name>Zn(2+)</name>
        <dbReference type="ChEBI" id="CHEBI:29105"/>
        <label>2</label>
    </ligand>
</feature>
<feature type="binding site" evidence="1">
    <location>
        <position position="885"/>
    </location>
    <ligand>
        <name>Zn(2+)</name>
        <dbReference type="ChEBI" id="CHEBI:29105"/>
        <label>2</label>
    </ligand>
</feature>
<feature type="binding site" evidence="1">
    <location>
        <position position="892"/>
    </location>
    <ligand>
        <name>Zn(2+)</name>
        <dbReference type="ChEBI" id="CHEBI:29105"/>
        <label>2</label>
    </ligand>
</feature>
<feature type="binding site" evidence="1">
    <location>
        <position position="895"/>
    </location>
    <ligand>
        <name>Zn(2+)</name>
        <dbReference type="ChEBI" id="CHEBI:29105"/>
        <label>2</label>
    </ligand>
</feature>
<accession>Q2K9M3</accession>
<dbReference type="EC" id="2.7.7.6" evidence="1"/>
<dbReference type="EMBL" id="CP000133">
    <property type="protein sequence ID" value="ABC90463.1"/>
    <property type="molecule type" value="Genomic_DNA"/>
</dbReference>
<dbReference type="RefSeq" id="WP_011424976.1">
    <property type="nucleotide sequence ID" value="NC_007761.1"/>
</dbReference>
<dbReference type="SMR" id="Q2K9M3"/>
<dbReference type="KEGG" id="ret:RHE_CH01668"/>
<dbReference type="eggNOG" id="COG0086">
    <property type="taxonomic scope" value="Bacteria"/>
</dbReference>
<dbReference type="HOGENOM" id="CLU_000524_3_1_5"/>
<dbReference type="OrthoDB" id="9815296at2"/>
<dbReference type="Proteomes" id="UP000001936">
    <property type="component" value="Chromosome"/>
</dbReference>
<dbReference type="GO" id="GO:0000428">
    <property type="term" value="C:DNA-directed RNA polymerase complex"/>
    <property type="evidence" value="ECO:0007669"/>
    <property type="project" value="UniProtKB-KW"/>
</dbReference>
<dbReference type="GO" id="GO:0003677">
    <property type="term" value="F:DNA binding"/>
    <property type="evidence" value="ECO:0007669"/>
    <property type="project" value="UniProtKB-UniRule"/>
</dbReference>
<dbReference type="GO" id="GO:0003899">
    <property type="term" value="F:DNA-directed RNA polymerase activity"/>
    <property type="evidence" value="ECO:0007669"/>
    <property type="project" value="UniProtKB-UniRule"/>
</dbReference>
<dbReference type="GO" id="GO:0000287">
    <property type="term" value="F:magnesium ion binding"/>
    <property type="evidence" value="ECO:0007669"/>
    <property type="project" value="UniProtKB-UniRule"/>
</dbReference>
<dbReference type="GO" id="GO:0008270">
    <property type="term" value="F:zinc ion binding"/>
    <property type="evidence" value="ECO:0007669"/>
    <property type="project" value="UniProtKB-UniRule"/>
</dbReference>
<dbReference type="GO" id="GO:0006351">
    <property type="term" value="P:DNA-templated transcription"/>
    <property type="evidence" value="ECO:0007669"/>
    <property type="project" value="UniProtKB-UniRule"/>
</dbReference>
<dbReference type="CDD" id="cd02655">
    <property type="entry name" value="RNAP_beta'_C"/>
    <property type="match status" value="1"/>
</dbReference>
<dbReference type="CDD" id="cd01609">
    <property type="entry name" value="RNAP_beta'_N"/>
    <property type="match status" value="1"/>
</dbReference>
<dbReference type="Gene3D" id="1.10.132.30">
    <property type="match status" value="1"/>
</dbReference>
<dbReference type="Gene3D" id="1.10.150.390">
    <property type="match status" value="1"/>
</dbReference>
<dbReference type="Gene3D" id="1.10.1790.20">
    <property type="match status" value="1"/>
</dbReference>
<dbReference type="Gene3D" id="1.10.40.90">
    <property type="match status" value="1"/>
</dbReference>
<dbReference type="Gene3D" id="2.40.40.20">
    <property type="match status" value="1"/>
</dbReference>
<dbReference type="Gene3D" id="2.40.50.100">
    <property type="match status" value="3"/>
</dbReference>
<dbReference type="Gene3D" id="4.10.860.120">
    <property type="entry name" value="RNA polymerase II, clamp domain"/>
    <property type="match status" value="1"/>
</dbReference>
<dbReference type="Gene3D" id="1.10.274.100">
    <property type="entry name" value="RNA polymerase Rpb1, domain 3"/>
    <property type="match status" value="2"/>
</dbReference>
<dbReference type="HAMAP" id="MF_01322">
    <property type="entry name" value="RNApol_bact_RpoC"/>
    <property type="match status" value="1"/>
</dbReference>
<dbReference type="InterPro" id="IPR045867">
    <property type="entry name" value="DNA-dir_RpoC_beta_prime"/>
</dbReference>
<dbReference type="InterPro" id="IPR012754">
    <property type="entry name" value="DNA-dir_RpoC_beta_prime_bact"/>
</dbReference>
<dbReference type="InterPro" id="IPR000722">
    <property type="entry name" value="RNA_pol_asu"/>
</dbReference>
<dbReference type="InterPro" id="IPR006592">
    <property type="entry name" value="RNA_pol_N"/>
</dbReference>
<dbReference type="InterPro" id="IPR007080">
    <property type="entry name" value="RNA_pol_Rpb1_1"/>
</dbReference>
<dbReference type="InterPro" id="IPR007066">
    <property type="entry name" value="RNA_pol_Rpb1_3"/>
</dbReference>
<dbReference type="InterPro" id="IPR042102">
    <property type="entry name" value="RNA_pol_Rpb1_3_sf"/>
</dbReference>
<dbReference type="InterPro" id="IPR007083">
    <property type="entry name" value="RNA_pol_Rpb1_4"/>
</dbReference>
<dbReference type="InterPro" id="IPR007081">
    <property type="entry name" value="RNA_pol_Rpb1_5"/>
</dbReference>
<dbReference type="InterPro" id="IPR044893">
    <property type="entry name" value="RNA_pol_Rpb1_clamp_domain"/>
</dbReference>
<dbReference type="InterPro" id="IPR038120">
    <property type="entry name" value="Rpb1_funnel_sf"/>
</dbReference>
<dbReference type="NCBIfam" id="TIGR02386">
    <property type="entry name" value="rpoC_TIGR"/>
    <property type="match status" value="1"/>
</dbReference>
<dbReference type="PANTHER" id="PTHR19376">
    <property type="entry name" value="DNA-DIRECTED RNA POLYMERASE"/>
    <property type="match status" value="1"/>
</dbReference>
<dbReference type="PANTHER" id="PTHR19376:SF54">
    <property type="entry name" value="DNA-DIRECTED RNA POLYMERASE SUBUNIT BETA"/>
    <property type="match status" value="1"/>
</dbReference>
<dbReference type="Pfam" id="PF04997">
    <property type="entry name" value="RNA_pol_Rpb1_1"/>
    <property type="match status" value="1"/>
</dbReference>
<dbReference type="Pfam" id="PF00623">
    <property type="entry name" value="RNA_pol_Rpb1_2"/>
    <property type="match status" value="1"/>
</dbReference>
<dbReference type="Pfam" id="PF04983">
    <property type="entry name" value="RNA_pol_Rpb1_3"/>
    <property type="match status" value="1"/>
</dbReference>
<dbReference type="Pfam" id="PF05000">
    <property type="entry name" value="RNA_pol_Rpb1_4"/>
    <property type="match status" value="1"/>
</dbReference>
<dbReference type="Pfam" id="PF04998">
    <property type="entry name" value="RNA_pol_Rpb1_5"/>
    <property type="match status" value="1"/>
</dbReference>
<dbReference type="SMART" id="SM00663">
    <property type="entry name" value="RPOLA_N"/>
    <property type="match status" value="1"/>
</dbReference>
<dbReference type="SUPFAM" id="SSF64484">
    <property type="entry name" value="beta and beta-prime subunits of DNA dependent RNA-polymerase"/>
    <property type="match status" value="1"/>
</dbReference>
<proteinExistence type="inferred from homology"/>
<organism>
    <name type="scientific">Rhizobium etli (strain ATCC 51251 / DSM 11541 / JCM 21823 / NBRC 15573 / CFN 42)</name>
    <dbReference type="NCBI Taxonomy" id="347834"/>
    <lineage>
        <taxon>Bacteria</taxon>
        <taxon>Pseudomonadati</taxon>
        <taxon>Pseudomonadota</taxon>
        <taxon>Alphaproteobacteria</taxon>
        <taxon>Hyphomicrobiales</taxon>
        <taxon>Rhizobiaceae</taxon>
        <taxon>Rhizobium/Agrobacterium group</taxon>
        <taxon>Rhizobium</taxon>
    </lineage>
</organism>
<protein>
    <recommendedName>
        <fullName evidence="1">DNA-directed RNA polymerase subunit beta'</fullName>
        <shortName evidence="1">RNAP subunit beta'</shortName>
        <ecNumber evidence="1">2.7.7.6</ecNumber>
    </recommendedName>
    <alternativeName>
        <fullName evidence="1">RNA polymerase subunit beta'</fullName>
    </alternativeName>
    <alternativeName>
        <fullName evidence="1">Transcriptase subunit beta'</fullName>
    </alternativeName>
</protein>
<evidence type="ECO:0000255" key="1">
    <source>
        <dbReference type="HAMAP-Rule" id="MF_01322"/>
    </source>
</evidence>
<comment type="function">
    <text evidence="1">DNA-dependent RNA polymerase catalyzes the transcription of DNA into RNA using the four ribonucleoside triphosphates as substrates.</text>
</comment>
<comment type="catalytic activity">
    <reaction evidence="1">
        <text>RNA(n) + a ribonucleoside 5'-triphosphate = RNA(n+1) + diphosphate</text>
        <dbReference type="Rhea" id="RHEA:21248"/>
        <dbReference type="Rhea" id="RHEA-COMP:14527"/>
        <dbReference type="Rhea" id="RHEA-COMP:17342"/>
        <dbReference type="ChEBI" id="CHEBI:33019"/>
        <dbReference type="ChEBI" id="CHEBI:61557"/>
        <dbReference type="ChEBI" id="CHEBI:140395"/>
        <dbReference type="EC" id="2.7.7.6"/>
    </reaction>
</comment>
<comment type="cofactor">
    <cofactor evidence="1">
        <name>Mg(2+)</name>
        <dbReference type="ChEBI" id="CHEBI:18420"/>
    </cofactor>
    <text evidence="1">Binds 1 Mg(2+) ion per subunit.</text>
</comment>
<comment type="cofactor">
    <cofactor evidence="1">
        <name>Zn(2+)</name>
        <dbReference type="ChEBI" id="CHEBI:29105"/>
    </cofactor>
    <text evidence="1">Binds 2 Zn(2+) ions per subunit.</text>
</comment>
<comment type="subunit">
    <text evidence="1">The RNAP catalytic core consists of 2 alpha, 1 beta, 1 beta' and 1 omega subunit. When a sigma factor is associated with the core the holoenzyme is formed, which can initiate transcription.</text>
</comment>
<comment type="similarity">
    <text evidence="1">Belongs to the RNA polymerase beta' chain family.</text>
</comment>